<comment type="function">
    <text evidence="1">Part of a membrane-bound complex that couples electron transfer with translocation of ions across the membrane. Required to maintain the reduced state of SoxR.</text>
</comment>
<comment type="subunit">
    <text evidence="1">The complex is composed of six subunits: RsxA, RsxB, RsxC, RsxD, RsxE and RsxG.</text>
</comment>
<comment type="subcellular location">
    <subcellularLocation>
        <location evidence="1">Cell inner membrane</location>
        <topology evidence="1">Multi-pass membrane protein</topology>
    </subcellularLocation>
</comment>
<comment type="similarity">
    <text evidence="1">Belongs to the NqrDE/RnfAE family.</text>
</comment>
<feature type="chain" id="PRO_1000125859" description="Ion-translocating oxidoreductase complex subunit E">
    <location>
        <begin position="1"/>
        <end position="230"/>
    </location>
</feature>
<feature type="transmembrane region" description="Helical" evidence="1">
    <location>
        <begin position="18"/>
        <end position="38"/>
    </location>
</feature>
<feature type="transmembrane region" description="Helical" evidence="1">
    <location>
        <begin position="39"/>
        <end position="59"/>
    </location>
</feature>
<feature type="transmembrane region" description="Helical" evidence="1">
    <location>
        <begin position="63"/>
        <end position="83"/>
    </location>
</feature>
<feature type="transmembrane region" description="Helical" evidence="1">
    <location>
        <begin position="86"/>
        <end position="106"/>
    </location>
</feature>
<feature type="transmembrane region" description="Helical" evidence="1">
    <location>
        <begin position="125"/>
        <end position="145"/>
    </location>
</feature>
<feature type="transmembrane region" description="Helical" evidence="1">
    <location>
        <begin position="182"/>
        <end position="202"/>
    </location>
</feature>
<gene>
    <name evidence="1" type="primary">rsxE</name>
    <name type="ordered locus">SeD_A1888</name>
</gene>
<protein>
    <recommendedName>
        <fullName evidence="1">Ion-translocating oxidoreductase complex subunit E</fullName>
        <ecNumber evidence="1">7.-.-.-</ecNumber>
    </recommendedName>
    <alternativeName>
        <fullName evidence="1">Rsx electron transport complex subunit E</fullName>
    </alternativeName>
</protein>
<accession>B5FIF0</accession>
<evidence type="ECO:0000255" key="1">
    <source>
        <dbReference type="HAMAP-Rule" id="MF_00478"/>
    </source>
</evidence>
<organism>
    <name type="scientific">Salmonella dublin (strain CT_02021853)</name>
    <dbReference type="NCBI Taxonomy" id="439851"/>
    <lineage>
        <taxon>Bacteria</taxon>
        <taxon>Pseudomonadati</taxon>
        <taxon>Pseudomonadota</taxon>
        <taxon>Gammaproteobacteria</taxon>
        <taxon>Enterobacterales</taxon>
        <taxon>Enterobacteriaceae</taxon>
        <taxon>Salmonella</taxon>
    </lineage>
</organism>
<sequence>MSEIKDIVVQGLWKNNSALVQLLGLCPLLAVTSTATNALGLGLATTLVLTLTNLTVSALRRWTPAEIRIPIYVMIIASVVSAVQMLINAYAFGLYQSLGIFIPLIVTNCIVVGRAEAFAAKKGPWLSALDGFSIGMGATGAMFVLGSLREILGNGTLFDGADSLLGGWAKVLRVEIFHTDSPFLLARLPPGAFIGLGLMLAVKYLIDEKMKKRRAETAPSAVPAGETGKV</sequence>
<keyword id="KW-0997">Cell inner membrane</keyword>
<keyword id="KW-1003">Cell membrane</keyword>
<keyword id="KW-0249">Electron transport</keyword>
<keyword id="KW-0472">Membrane</keyword>
<keyword id="KW-1278">Translocase</keyword>
<keyword id="KW-0812">Transmembrane</keyword>
<keyword id="KW-1133">Transmembrane helix</keyword>
<keyword id="KW-0813">Transport</keyword>
<reference key="1">
    <citation type="journal article" date="2011" name="J. Bacteriol.">
        <title>Comparative genomics of 28 Salmonella enterica isolates: evidence for CRISPR-mediated adaptive sublineage evolution.</title>
        <authorList>
            <person name="Fricke W.F."/>
            <person name="Mammel M.K."/>
            <person name="McDermott P.F."/>
            <person name="Tartera C."/>
            <person name="White D.G."/>
            <person name="Leclerc J.E."/>
            <person name="Ravel J."/>
            <person name="Cebula T.A."/>
        </authorList>
    </citation>
    <scope>NUCLEOTIDE SEQUENCE [LARGE SCALE GENOMIC DNA]</scope>
    <source>
        <strain>CT_02021853</strain>
    </source>
</reference>
<name>RSXE_SALDC</name>
<proteinExistence type="inferred from homology"/>
<dbReference type="EC" id="7.-.-.-" evidence="1"/>
<dbReference type="EMBL" id="CP001144">
    <property type="protein sequence ID" value="ACH77469.1"/>
    <property type="molecule type" value="Genomic_DNA"/>
</dbReference>
<dbReference type="RefSeq" id="WP_001289629.1">
    <property type="nucleotide sequence ID" value="NC_011205.1"/>
</dbReference>
<dbReference type="SMR" id="B5FIF0"/>
<dbReference type="KEGG" id="sed:SeD_A1888"/>
<dbReference type="HOGENOM" id="CLU_046659_1_0_6"/>
<dbReference type="Proteomes" id="UP000008322">
    <property type="component" value="Chromosome"/>
</dbReference>
<dbReference type="GO" id="GO:0005886">
    <property type="term" value="C:plasma membrane"/>
    <property type="evidence" value="ECO:0007669"/>
    <property type="project" value="UniProtKB-SubCell"/>
</dbReference>
<dbReference type="GO" id="GO:0022900">
    <property type="term" value="P:electron transport chain"/>
    <property type="evidence" value="ECO:0007669"/>
    <property type="project" value="UniProtKB-UniRule"/>
</dbReference>
<dbReference type="HAMAP" id="MF_00478">
    <property type="entry name" value="RsxE_RnfE"/>
    <property type="match status" value="1"/>
</dbReference>
<dbReference type="InterPro" id="IPR003667">
    <property type="entry name" value="NqrDE/RnfAE"/>
</dbReference>
<dbReference type="InterPro" id="IPR010968">
    <property type="entry name" value="RnfE"/>
</dbReference>
<dbReference type="NCBIfam" id="NF009070">
    <property type="entry name" value="PRK12405.1"/>
    <property type="match status" value="1"/>
</dbReference>
<dbReference type="NCBIfam" id="TIGR01948">
    <property type="entry name" value="rnfE"/>
    <property type="match status" value="1"/>
</dbReference>
<dbReference type="PANTHER" id="PTHR30586">
    <property type="entry name" value="ELECTRON TRANSPORT COMPLEX PROTEIN RNFE"/>
    <property type="match status" value="1"/>
</dbReference>
<dbReference type="PANTHER" id="PTHR30586:SF0">
    <property type="entry name" value="ION-TRANSLOCATING OXIDOREDUCTASE COMPLEX SUBUNIT E"/>
    <property type="match status" value="1"/>
</dbReference>
<dbReference type="Pfam" id="PF02508">
    <property type="entry name" value="Rnf-Nqr"/>
    <property type="match status" value="1"/>
</dbReference>
<dbReference type="PIRSF" id="PIRSF006102">
    <property type="entry name" value="NQR_DE"/>
    <property type="match status" value="1"/>
</dbReference>